<gene>
    <name evidence="1" type="primary">DUT</name>
    <name type="ordered locus">UL72</name>
</gene>
<accession>Q6SW70</accession>
<accession>D2K3M9</accession>
<organismHost>
    <name type="scientific">Homo sapiens</name>
    <name type="common">Human</name>
    <dbReference type="NCBI Taxonomy" id="9606"/>
</organismHost>
<name>DUT_HCMVM</name>
<keyword id="KW-0378">Hydrolase</keyword>
<keyword id="KW-0460">Magnesium</keyword>
<keyword id="KW-0479">Metal-binding</keyword>
<keyword id="KW-0546">Nucleotide metabolism</keyword>
<keyword id="KW-1185">Reference proteome</keyword>
<feature type="chain" id="PRO_0000416708" description="Deoxyuridine 5'-triphosphate nucleotidohydrolase">
    <location>
        <begin position="1"/>
        <end position="388"/>
    </location>
</feature>
<feature type="region of interest" description="Disordered" evidence="2">
    <location>
        <begin position="77"/>
        <end position="96"/>
    </location>
</feature>
<feature type="region of interest" description="Disordered" evidence="2">
    <location>
        <begin position="336"/>
        <end position="388"/>
    </location>
</feature>
<feature type="compositionally biased region" description="Basic and acidic residues" evidence="2">
    <location>
        <begin position="77"/>
        <end position="88"/>
    </location>
</feature>
<feature type="compositionally biased region" description="Acidic residues" evidence="2">
    <location>
        <begin position="351"/>
        <end position="363"/>
    </location>
</feature>
<protein>
    <recommendedName>
        <fullName evidence="1">Deoxyuridine 5'-triphosphate nucleotidohydrolase</fullName>
        <shortName evidence="1">dUTPase</shortName>
        <ecNumber evidence="1">3.6.1.23</ecNumber>
    </recommendedName>
    <alternativeName>
        <fullName evidence="1">dUTP pyrophosphatase</fullName>
    </alternativeName>
</protein>
<dbReference type="EC" id="3.6.1.23" evidence="1"/>
<dbReference type="EMBL" id="AY446894">
    <property type="protein sequence ID" value="AAR31625.1"/>
    <property type="molecule type" value="Genomic_DNA"/>
</dbReference>
<dbReference type="RefSeq" id="YP_081520.1">
    <property type="nucleotide sequence ID" value="NC_006273.2"/>
</dbReference>
<dbReference type="SMR" id="Q6SW70"/>
<dbReference type="DNASU" id="3077454"/>
<dbReference type="GeneID" id="3077454"/>
<dbReference type="KEGG" id="vg:3077454"/>
<dbReference type="Reactome" id="R-HSA-9609690">
    <property type="pathway name" value="HCMV Early Events"/>
</dbReference>
<dbReference type="UniPathway" id="UPA00610">
    <property type="reaction ID" value="UER00666"/>
</dbReference>
<dbReference type="Proteomes" id="UP000000938">
    <property type="component" value="Segment"/>
</dbReference>
<dbReference type="GO" id="GO:0004170">
    <property type="term" value="F:dUTP diphosphatase activity"/>
    <property type="evidence" value="ECO:0007669"/>
    <property type="project" value="UniProtKB-EC"/>
</dbReference>
<dbReference type="GO" id="GO:0046872">
    <property type="term" value="F:metal ion binding"/>
    <property type="evidence" value="ECO:0007669"/>
    <property type="project" value="UniProtKB-KW"/>
</dbReference>
<dbReference type="GO" id="GO:0006226">
    <property type="term" value="P:dUMP biosynthetic process"/>
    <property type="evidence" value="ECO:0007669"/>
    <property type="project" value="UniProtKB-UniPathway"/>
</dbReference>
<dbReference type="GO" id="GO:0046080">
    <property type="term" value="P:dUTP metabolic process"/>
    <property type="evidence" value="ECO:0007669"/>
    <property type="project" value="InterPro"/>
</dbReference>
<dbReference type="HAMAP" id="MF_04031">
    <property type="entry name" value="HSV_DUT"/>
    <property type="match status" value="1"/>
</dbReference>
<dbReference type="InterPro" id="IPR036157">
    <property type="entry name" value="dUTPase-like_sf"/>
</dbReference>
<dbReference type="InterPro" id="IPR006882">
    <property type="entry name" value="Herpes_Orf11"/>
</dbReference>
<dbReference type="InterPro" id="IPR034745">
    <property type="entry name" value="HSV_DUT"/>
</dbReference>
<dbReference type="Pfam" id="PF04797">
    <property type="entry name" value="Herpes_ORF11"/>
    <property type="match status" value="1"/>
</dbReference>
<dbReference type="SUPFAM" id="SSF51283">
    <property type="entry name" value="dUTPase-like"/>
    <property type="match status" value="1"/>
</dbReference>
<comment type="function">
    <text evidence="1">Involved in nucleotide metabolism: produces dUMP, the immediate precursor of thymidine nucleotides and decreases the intracellular concentration of dUTP to avoid uracil incorporation into viral DNA.</text>
</comment>
<comment type="catalytic activity">
    <reaction evidence="1">
        <text>dUTP + H2O = dUMP + diphosphate + H(+)</text>
        <dbReference type="Rhea" id="RHEA:10248"/>
        <dbReference type="ChEBI" id="CHEBI:15377"/>
        <dbReference type="ChEBI" id="CHEBI:15378"/>
        <dbReference type="ChEBI" id="CHEBI:33019"/>
        <dbReference type="ChEBI" id="CHEBI:61555"/>
        <dbReference type="ChEBI" id="CHEBI:246422"/>
        <dbReference type="EC" id="3.6.1.23"/>
    </reaction>
</comment>
<comment type="cofactor">
    <cofactor evidence="1">
        <name>Mg(2+)</name>
        <dbReference type="ChEBI" id="CHEBI:18420"/>
    </cofactor>
</comment>
<comment type="pathway">
    <text>Pyrimidine metabolism; dUMP biosynthesis; dUMP from dCTP (dUTP route): step 2/2.</text>
</comment>
<comment type="similarity">
    <text evidence="1">Belongs to the dUTPase family.</text>
</comment>
<reference key="1">
    <citation type="journal article" date="2004" name="J. Gen. Virol.">
        <title>Genetic content of wild-type human cytomegalovirus.</title>
        <authorList>
            <person name="Dolan A."/>
            <person name="Cunningham C."/>
            <person name="Hector R.D."/>
            <person name="Hassan-Walker A.F."/>
            <person name="Lee L."/>
            <person name="Addison C."/>
            <person name="Dargan D.J."/>
            <person name="McGeoch D.J."/>
            <person name="Gatherer D."/>
            <person name="Emery V.C."/>
            <person name="Griffiths P.D."/>
            <person name="Sinzger C."/>
            <person name="McSharry B.P."/>
            <person name="Wilkinson G.W.G."/>
            <person name="Davison A.J."/>
        </authorList>
    </citation>
    <scope>NUCLEOTIDE SEQUENCE [LARGE SCALE GENOMIC DNA]</scope>
</reference>
<organism>
    <name type="scientific">Human cytomegalovirus (strain Merlin)</name>
    <name type="common">HHV-5</name>
    <name type="synonym">Human herpesvirus 5</name>
    <dbReference type="NCBI Taxonomy" id="295027"/>
    <lineage>
        <taxon>Viruses</taxon>
        <taxon>Duplodnaviria</taxon>
        <taxon>Heunggongvirae</taxon>
        <taxon>Peploviricota</taxon>
        <taxon>Herviviricetes</taxon>
        <taxon>Herpesvirales</taxon>
        <taxon>Orthoherpesviridae</taxon>
        <taxon>Betaherpesvirinae</taxon>
        <taxon>Cytomegalovirus</taxon>
        <taxon>Cytomegalovirus humanbeta5</taxon>
        <taxon>Human cytomegalovirus</taxon>
    </lineage>
</organism>
<evidence type="ECO:0000255" key="1">
    <source>
        <dbReference type="HAMAP-Rule" id="MF_04031"/>
    </source>
</evidence>
<evidence type="ECO:0000256" key="2">
    <source>
        <dbReference type="SAM" id="MobiDB-lite"/>
    </source>
</evidence>
<sequence>MLTMLTDRIDSQLVLSRLPRSRFQRFWETPTLIMKEESAPSSGSIILAEKSVNMRYCVRFASDSDFQTTFTLPQSTEEKYDKEQHPGEDEASSPLPSPLKVPYKWMPSSFIVKQCHTQLAFYNKHIIWLSRERKVPTSLGVSLYIPEGFFGITFYKCLDAQFVCMPELLESGLQVPQLDVVNLNDTFQSIFPGTIEGDIGVFPCFVPEPWQLMNLPPPNEHRFFSLRTRQTLVIGPGHTQTVYFDAAYVHAPGICALIVGVRQFSQSDLIIRPTIWLPGTAAGVTVVNTSHTTVCISPHTTVAKAVFTTHRFTYLPVGSHPLGQMIVPPTPDIGFTHTPEHALLQRTPSPVDDDVDETEEDEKSSDAESPVNTSDVIFDVGPKPPRHP</sequence>
<proteinExistence type="inferred from homology"/>